<dbReference type="EC" id="2.7.7.64"/>
<dbReference type="EMBL" id="CM000131">
    <property type="status" value="NOT_ANNOTATED_CDS"/>
    <property type="molecule type" value="Genomic_DNA"/>
</dbReference>
<dbReference type="SMR" id="A2YGP6"/>
<dbReference type="STRING" id="39946.A2YGP6"/>
<dbReference type="EnsemblPlants" id="OsPr106_06g0028110.01">
    <property type="protein sequence ID" value="OsPr106_06g0028110.01"/>
    <property type="gene ID" value="OsPr106_06g0028110"/>
</dbReference>
<dbReference type="Gramene" id="OsPr106_06g0028110.01">
    <property type="protein sequence ID" value="OsPr106_06g0028110.01"/>
    <property type="gene ID" value="OsPr106_06g0028110"/>
</dbReference>
<dbReference type="Proteomes" id="UP000007015">
    <property type="component" value="Chromosome 6"/>
</dbReference>
<dbReference type="GO" id="GO:0003977">
    <property type="term" value="F:UDP-N-acetylglucosamine diphosphorylase activity"/>
    <property type="evidence" value="ECO:0007669"/>
    <property type="project" value="TreeGrafter"/>
</dbReference>
<dbReference type="GO" id="GO:0051748">
    <property type="term" value="F:UTP-monosaccharide-1-phosphate uridylyltransferase activity"/>
    <property type="evidence" value="ECO:0007669"/>
    <property type="project" value="UniProtKB-EC"/>
</dbReference>
<dbReference type="GO" id="GO:0006048">
    <property type="term" value="P:UDP-N-acetylglucosamine biosynthetic process"/>
    <property type="evidence" value="ECO:0007669"/>
    <property type="project" value="TreeGrafter"/>
</dbReference>
<dbReference type="CDD" id="cd06424">
    <property type="entry name" value="UGGPase"/>
    <property type="match status" value="1"/>
</dbReference>
<dbReference type="FunFam" id="2.160.10.30:FF:000001">
    <property type="entry name" value="UDP-sugar pyrophosphorylase"/>
    <property type="match status" value="1"/>
</dbReference>
<dbReference type="FunFam" id="3.90.550.10:FF:000091">
    <property type="entry name" value="UDP-sugar pyrophosphorylase"/>
    <property type="match status" value="1"/>
</dbReference>
<dbReference type="Gene3D" id="2.160.10.30">
    <property type="match status" value="1"/>
</dbReference>
<dbReference type="Gene3D" id="3.90.550.10">
    <property type="entry name" value="Spore Coat Polysaccharide Biosynthesis Protein SpsA, Chain A"/>
    <property type="match status" value="1"/>
</dbReference>
<dbReference type="InterPro" id="IPR029044">
    <property type="entry name" value="Nucleotide-diphossugar_trans"/>
</dbReference>
<dbReference type="InterPro" id="IPR039741">
    <property type="entry name" value="UDP-sugar_pyrophosphorylase"/>
</dbReference>
<dbReference type="InterPro" id="IPR002618">
    <property type="entry name" value="UDPGP_fam"/>
</dbReference>
<dbReference type="PANTHER" id="PTHR11952">
    <property type="entry name" value="UDP- GLUCOSE PYROPHOSPHORYLASE"/>
    <property type="match status" value="1"/>
</dbReference>
<dbReference type="PANTHER" id="PTHR11952:SF9">
    <property type="entry name" value="UDP-SUGAR PYROPHOSPHORYLASE"/>
    <property type="match status" value="1"/>
</dbReference>
<dbReference type="Pfam" id="PF01704">
    <property type="entry name" value="UDPGP"/>
    <property type="match status" value="1"/>
</dbReference>
<dbReference type="SUPFAM" id="SSF53448">
    <property type="entry name" value="Nucleotide-diphospho-sugar transferases"/>
    <property type="match status" value="1"/>
</dbReference>
<reference key="1">
    <citation type="journal article" date="2005" name="PLoS Biol.">
        <title>The genomes of Oryza sativa: a history of duplications.</title>
        <authorList>
            <person name="Yu J."/>
            <person name="Wang J."/>
            <person name="Lin W."/>
            <person name="Li S."/>
            <person name="Li H."/>
            <person name="Zhou J."/>
            <person name="Ni P."/>
            <person name="Dong W."/>
            <person name="Hu S."/>
            <person name="Zeng C."/>
            <person name="Zhang J."/>
            <person name="Zhang Y."/>
            <person name="Li R."/>
            <person name="Xu Z."/>
            <person name="Li S."/>
            <person name="Li X."/>
            <person name="Zheng H."/>
            <person name="Cong L."/>
            <person name="Lin L."/>
            <person name="Yin J."/>
            <person name="Geng J."/>
            <person name="Li G."/>
            <person name="Shi J."/>
            <person name="Liu J."/>
            <person name="Lv H."/>
            <person name="Li J."/>
            <person name="Wang J."/>
            <person name="Deng Y."/>
            <person name="Ran L."/>
            <person name="Shi X."/>
            <person name="Wang X."/>
            <person name="Wu Q."/>
            <person name="Li C."/>
            <person name="Ren X."/>
            <person name="Wang J."/>
            <person name="Wang X."/>
            <person name="Li D."/>
            <person name="Liu D."/>
            <person name="Zhang X."/>
            <person name="Ji Z."/>
            <person name="Zhao W."/>
            <person name="Sun Y."/>
            <person name="Zhang Z."/>
            <person name="Bao J."/>
            <person name="Han Y."/>
            <person name="Dong L."/>
            <person name="Ji J."/>
            <person name="Chen P."/>
            <person name="Wu S."/>
            <person name="Liu J."/>
            <person name="Xiao Y."/>
            <person name="Bu D."/>
            <person name="Tan J."/>
            <person name="Yang L."/>
            <person name="Ye C."/>
            <person name="Zhang J."/>
            <person name="Xu J."/>
            <person name="Zhou Y."/>
            <person name="Yu Y."/>
            <person name="Zhang B."/>
            <person name="Zhuang S."/>
            <person name="Wei H."/>
            <person name="Liu B."/>
            <person name="Lei M."/>
            <person name="Yu H."/>
            <person name="Li Y."/>
            <person name="Xu H."/>
            <person name="Wei S."/>
            <person name="He X."/>
            <person name="Fang L."/>
            <person name="Zhang Z."/>
            <person name="Zhang Y."/>
            <person name="Huang X."/>
            <person name="Su Z."/>
            <person name="Tong W."/>
            <person name="Li J."/>
            <person name="Tong Z."/>
            <person name="Li S."/>
            <person name="Ye J."/>
            <person name="Wang L."/>
            <person name="Fang L."/>
            <person name="Lei T."/>
            <person name="Chen C.-S."/>
            <person name="Chen H.-C."/>
            <person name="Xu Z."/>
            <person name="Li H."/>
            <person name="Huang H."/>
            <person name="Zhang F."/>
            <person name="Xu H."/>
            <person name="Li N."/>
            <person name="Zhao C."/>
            <person name="Li S."/>
            <person name="Dong L."/>
            <person name="Huang Y."/>
            <person name="Li L."/>
            <person name="Xi Y."/>
            <person name="Qi Q."/>
            <person name="Li W."/>
            <person name="Zhang B."/>
            <person name="Hu W."/>
            <person name="Zhang Y."/>
            <person name="Tian X."/>
            <person name="Jiao Y."/>
            <person name="Liang X."/>
            <person name="Jin J."/>
            <person name="Gao L."/>
            <person name="Zheng W."/>
            <person name="Hao B."/>
            <person name="Liu S.-M."/>
            <person name="Wang W."/>
            <person name="Yuan L."/>
            <person name="Cao M."/>
            <person name="McDermott J."/>
            <person name="Samudrala R."/>
            <person name="Wang J."/>
            <person name="Wong G.K.-S."/>
            <person name="Yang H."/>
        </authorList>
    </citation>
    <scope>NUCLEOTIDE SEQUENCE [LARGE SCALE GENOMIC DNA]</scope>
    <source>
        <strain>cv. 93-11</strain>
    </source>
</reference>
<comment type="function">
    <text evidence="1">May function as the terminal enzyme of the myo-inositol oxidation (MIO) pathway. May also play a role in the salvage pathway for synthesis of nucleotide sugars (By similarity).</text>
</comment>
<comment type="catalytic activity">
    <reaction>
        <text>a monosaccharide 1-phosphate + UTP + H(+) = a UDP-monosaccharide + diphosphate</text>
        <dbReference type="Rhea" id="RHEA:13205"/>
        <dbReference type="ChEBI" id="CHEBI:15378"/>
        <dbReference type="ChEBI" id="CHEBI:33019"/>
        <dbReference type="ChEBI" id="CHEBI:46398"/>
        <dbReference type="ChEBI" id="CHEBI:140358"/>
        <dbReference type="ChEBI" id="CHEBI:140359"/>
        <dbReference type="EC" id="2.7.7.64"/>
    </reaction>
</comment>
<comment type="cofactor">
    <cofactor evidence="1">
        <name>Mg(2+)</name>
        <dbReference type="ChEBI" id="CHEBI:18420"/>
    </cofactor>
    <cofactor evidence="1">
        <name>Mn(2+)</name>
        <dbReference type="ChEBI" id="CHEBI:29035"/>
    </cofactor>
</comment>
<comment type="similarity">
    <text evidence="2">Belongs to the USP family.</text>
</comment>
<evidence type="ECO:0000250" key="1"/>
<evidence type="ECO:0000305" key="2"/>
<feature type="chain" id="PRO_0000289981" description="UDP-sugar pyrophosphorylase">
    <location>
        <begin position="1"/>
        <end position="616"/>
    </location>
</feature>
<gene>
    <name type="primary">USP</name>
    <name type="ORF">OsI_023489</name>
</gene>
<sequence>MASDGNGAAAVAALGISGGGGDDWAPPLRRNLPLLAPHEVKLAKLLLSEGQSHLFEHWPEPGVDDDKKRNFFDQVCRLNSSYPGGLASYIQNARKLLADSKAGKNPYDGFSPSVPSGEVLTFGDDNFVSLEEAGVKEARHAAFVLVAGGLGERLGYKGIKVALPRETTTGKCFLQHYIESILALQEASCKLVEGECNTKIPFVIMTSDDTNALTVKLLESNSYFGMEPSQVHILKQEKVACLADNDARLALDPNDKYKIQTKPHGHGDVHALLYSSGLLEQWKSTGRKWVLFFQDTNGLLFNAIPSALGVSATKGYNVNSLAVPRKAKEAIGGITKLTHVDGRTMVINVEYNQLDPLLRATGHPDGDANCETGYSPYPGNINQLILEIGPYMEELQKTHGAISEFVNPKYTDSTKTAFKSSTRLECMMQDYPKTLPPSAKVGFTVMDAWLAYAPVKNNPEDAAKVPKGNPYHSATSGEMAIYRANSLILRKAGAQIADPVIDTFNGQEVEVWPRITWIPRWGLIFKDVKAKVHSNSSVSQRSALVINGKNITIQGLSLDGTLIVNAKDEAKFNVTGHIENKGWTIQHVDHKDTSEKEEIRIRGFKFNKVEQLELNY</sequence>
<protein>
    <recommendedName>
        <fullName>UDP-sugar pyrophosphorylase</fullName>
        <ecNumber>2.7.7.64</ecNumber>
    </recommendedName>
</protein>
<organism>
    <name type="scientific">Oryza sativa subsp. indica</name>
    <name type="common">Rice</name>
    <dbReference type="NCBI Taxonomy" id="39946"/>
    <lineage>
        <taxon>Eukaryota</taxon>
        <taxon>Viridiplantae</taxon>
        <taxon>Streptophyta</taxon>
        <taxon>Embryophyta</taxon>
        <taxon>Tracheophyta</taxon>
        <taxon>Spermatophyta</taxon>
        <taxon>Magnoliopsida</taxon>
        <taxon>Liliopsida</taxon>
        <taxon>Poales</taxon>
        <taxon>Poaceae</taxon>
        <taxon>BOP clade</taxon>
        <taxon>Oryzoideae</taxon>
        <taxon>Oryzeae</taxon>
        <taxon>Oryzinae</taxon>
        <taxon>Oryza</taxon>
        <taxon>Oryza sativa</taxon>
    </lineage>
</organism>
<proteinExistence type="inferred from homology"/>
<accession>A2YGP6</accession>
<keyword id="KW-0548">Nucleotidyltransferase</keyword>
<keyword id="KW-1185">Reference proteome</keyword>
<keyword id="KW-0808">Transferase</keyword>
<name>USP_ORYSI</name>